<name>BPIB3_MOUSE</name>
<proteinExistence type="evidence at transcript level"/>
<keyword id="KW-1015">Disulfide bond</keyword>
<keyword id="KW-0325">Glycoprotein</keyword>
<keyword id="KW-1185">Reference proteome</keyword>
<keyword id="KW-0964">Secreted</keyword>
<keyword id="KW-0732">Signal</keyword>
<gene>
    <name evidence="4" type="primary">Bpifb3</name>
    <name type="synonym">Lplunc3</name>
    <name type="synonym">Rya3</name>
</gene>
<reference key="1">
    <citation type="journal article" date="2009" name="PLoS Biol.">
        <title>Lineage-specific biology revealed by a finished genome assembly of the mouse.</title>
        <authorList>
            <person name="Church D.M."/>
            <person name="Goodstadt L."/>
            <person name="Hillier L.W."/>
            <person name="Zody M.C."/>
            <person name="Goldstein S."/>
            <person name="She X."/>
            <person name="Bult C.J."/>
            <person name="Agarwala R."/>
            <person name="Cherry J.L."/>
            <person name="DiCuccio M."/>
            <person name="Hlavina W."/>
            <person name="Kapustin Y."/>
            <person name="Meric P."/>
            <person name="Maglott D."/>
            <person name="Birtle Z."/>
            <person name="Marques A.C."/>
            <person name="Graves T."/>
            <person name="Zhou S."/>
            <person name="Teague B."/>
            <person name="Potamousis K."/>
            <person name="Churas C."/>
            <person name="Place M."/>
            <person name="Herschleb J."/>
            <person name="Runnheim R."/>
            <person name="Forrest D."/>
            <person name="Amos-Landgraf J."/>
            <person name="Schwartz D.C."/>
            <person name="Cheng Z."/>
            <person name="Lindblad-Toh K."/>
            <person name="Eichler E.E."/>
            <person name="Ponting C.P."/>
        </authorList>
    </citation>
    <scope>NUCLEOTIDE SEQUENCE [LARGE SCALE GENOMIC DNA]</scope>
    <source>
        <strain>C57BL/6J</strain>
    </source>
</reference>
<reference key="2">
    <citation type="journal article" date="2004" name="Genome Res.">
        <title>The status, quality, and expansion of the NIH full-length cDNA project: the Mammalian Gene Collection (MGC).</title>
        <authorList>
            <consortium name="The MGC Project Team"/>
        </authorList>
    </citation>
    <scope>NUCLEOTIDE SEQUENCE [LARGE SCALE MRNA]</scope>
    <source>
        <strain>C57BL/6J</strain>
        <tissue>Olfactory epithelium</tissue>
    </source>
</reference>
<protein>
    <recommendedName>
        <fullName evidence="3">BPI fold-containing family B member 3</fullName>
    </recommendedName>
    <alternativeName>
        <fullName>Ligand-binding protein RYA3</fullName>
    </alternativeName>
    <alternativeName>
        <fullName>Long palate, lung and nasal epithelium carcinoma-associated protein 3</fullName>
    </alternativeName>
</protein>
<feature type="signal peptide" evidence="2">
    <location>
        <begin position="1"/>
        <end position="20"/>
    </location>
</feature>
<feature type="chain" id="PRO_0000017171" description="BPI fold-containing family B member 3">
    <location>
        <begin position="21"/>
        <end position="473"/>
    </location>
</feature>
<feature type="glycosylation site" description="N-linked (GlcNAc...) asparagine" evidence="2">
    <location>
        <position position="139"/>
    </location>
</feature>
<feature type="disulfide bond" evidence="1">
    <location>
        <begin position="161"/>
        <end position="196"/>
    </location>
</feature>
<dbReference type="EMBL" id="AL833803">
    <property type="status" value="NOT_ANNOTATED_CDS"/>
    <property type="molecule type" value="Genomic_DNA"/>
</dbReference>
<dbReference type="EMBL" id="BC048084">
    <property type="protein sequence ID" value="AAH48084.2"/>
    <property type="molecule type" value="mRNA"/>
</dbReference>
<dbReference type="CCDS" id="CCDS16921.1"/>
<dbReference type="RefSeq" id="NP_001366402.1">
    <property type="nucleotide sequence ID" value="NM_001379473.1"/>
</dbReference>
<dbReference type="RefSeq" id="NP_919338.2">
    <property type="nucleotide sequence ID" value="NM_194357.2"/>
</dbReference>
<dbReference type="RefSeq" id="XP_006499875.1">
    <property type="nucleotide sequence ID" value="XM_006499812.1"/>
</dbReference>
<dbReference type="SMR" id="Q80ZU7"/>
<dbReference type="FunCoup" id="Q80ZU7">
    <property type="interactions" value="228"/>
</dbReference>
<dbReference type="STRING" id="10090.ENSMUSP00000086342"/>
<dbReference type="GlyCosmos" id="Q80ZU7">
    <property type="glycosylation" value="1 site, No reported glycans"/>
</dbReference>
<dbReference type="GlyGen" id="Q80ZU7">
    <property type="glycosylation" value="1 site"/>
</dbReference>
<dbReference type="PhosphoSitePlus" id="Q80ZU7"/>
<dbReference type="PaxDb" id="10090-ENSMUSP00000086342"/>
<dbReference type="ProteomicsDB" id="281703"/>
<dbReference type="Antibodypedia" id="59271">
    <property type="antibodies" value="51 antibodies from 14 providers"/>
</dbReference>
<dbReference type="DNASU" id="378700"/>
<dbReference type="Ensembl" id="ENSMUST00000088950.8">
    <property type="protein sequence ID" value="ENSMUSP00000086342.2"/>
    <property type="gene ID" value="ENSMUSG00000068008.9"/>
</dbReference>
<dbReference type="Ensembl" id="ENSMUST00000109760.2">
    <property type="protein sequence ID" value="ENSMUSP00000105382.2"/>
    <property type="gene ID" value="ENSMUSG00000068008.9"/>
</dbReference>
<dbReference type="GeneID" id="378700"/>
<dbReference type="KEGG" id="mmu:378700"/>
<dbReference type="UCSC" id="uc008nip.1">
    <property type="organism name" value="mouse"/>
</dbReference>
<dbReference type="AGR" id="MGI:2675077"/>
<dbReference type="CTD" id="359710"/>
<dbReference type="MGI" id="MGI:2675077">
    <property type="gene designation" value="Bpifb3"/>
</dbReference>
<dbReference type="VEuPathDB" id="HostDB:ENSMUSG00000068008"/>
<dbReference type="eggNOG" id="KOG4160">
    <property type="taxonomic scope" value="Eukaryota"/>
</dbReference>
<dbReference type="GeneTree" id="ENSGT01100000263546"/>
<dbReference type="HOGENOM" id="CLU_031635_1_0_1"/>
<dbReference type="InParanoid" id="Q80ZU7"/>
<dbReference type="OMA" id="EWLSHVV"/>
<dbReference type="OrthoDB" id="9905567at2759"/>
<dbReference type="PhylomeDB" id="Q80ZU7"/>
<dbReference type="TreeFam" id="TF315617"/>
<dbReference type="BioGRID-ORCS" id="378700">
    <property type="hits" value="3 hits in 78 CRISPR screens"/>
</dbReference>
<dbReference type="ChiTaRS" id="Bpifb3">
    <property type="organism name" value="mouse"/>
</dbReference>
<dbReference type="PRO" id="PR:Q80ZU7"/>
<dbReference type="Proteomes" id="UP000000589">
    <property type="component" value="Chromosome 2"/>
</dbReference>
<dbReference type="RNAct" id="Q80ZU7">
    <property type="molecule type" value="protein"/>
</dbReference>
<dbReference type="Bgee" id="ENSMUSG00000068008">
    <property type="expression patterns" value="Expressed in olfactory epithelium and 15 other cell types or tissues"/>
</dbReference>
<dbReference type="GO" id="GO:0005737">
    <property type="term" value="C:cytoplasm"/>
    <property type="evidence" value="ECO:0000250"/>
    <property type="project" value="UniProtKB"/>
</dbReference>
<dbReference type="GO" id="GO:0005576">
    <property type="term" value="C:extracellular region"/>
    <property type="evidence" value="ECO:0007669"/>
    <property type="project" value="UniProtKB-SubCell"/>
</dbReference>
<dbReference type="GO" id="GO:0008289">
    <property type="term" value="F:lipid binding"/>
    <property type="evidence" value="ECO:0007669"/>
    <property type="project" value="InterPro"/>
</dbReference>
<dbReference type="FunFam" id="3.15.10.10:FF:000004">
    <property type="entry name" value="BPI fold-containing family B member 3"/>
    <property type="match status" value="1"/>
</dbReference>
<dbReference type="FunFam" id="3.15.20.10:FF:000003">
    <property type="entry name" value="BPI fold-containing family B member 3"/>
    <property type="match status" value="1"/>
</dbReference>
<dbReference type="Gene3D" id="3.15.10.10">
    <property type="entry name" value="Bactericidal permeability-increasing protein, domain 1"/>
    <property type="match status" value="1"/>
</dbReference>
<dbReference type="Gene3D" id="3.15.20.10">
    <property type="entry name" value="Bactericidal permeability-increasing protein, domain 2"/>
    <property type="match status" value="1"/>
</dbReference>
<dbReference type="InterPro" id="IPR017943">
    <property type="entry name" value="Bactericidal_perm-incr_a/b_dom"/>
</dbReference>
<dbReference type="InterPro" id="IPR051660">
    <property type="entry name" value="BPI_fold-BPI/LBP"/>
</dbReference>
<dbReference type="InterPro" id="IPR001124">
    <property type="entry name" value="Lipid-bd_serum_glycop_C"/>
</dbReference>
<dbReference type="InterPro" id="IPR017942">
    <property type="entry name" value="Lipid-bd_serum_glycop_N"/>
</dbReference>
<dbReference type="PANTHER" id="PTHR46019:SF5">
    <property type="entry name" value="BPI FOLD-CONTAINING FAMILY B MEMBER 3"/>
    <property type="match status" value="1"/>
</dbReference>
<dbReference type="PANTHER" id="PTHR46019">
    <property type="entry name" value="BPI FOLD-CONTAINING FAMILY B MEMBER 4-RELATED"/>
    <property type="match status" value="1"/>
</dbReference>
<dbReference type="Pfam" id="PF01273">
    <property type="entry name" value="LBP_BPI_CETP"/>
    <property type="match status" value="1"/>
</dbReference>
<dbReference type="Pfam" id="PF02886">
    <property type="entry name" value="LBP_BPI_CETP_C"/>
    <property type="match status" value="1"/>
</dbReference>
<dbReference type="SMART" id="SM00328">
    <property type="entry name" value="BPI1"/>
    <property type="match status" value="1"/>
</dbReference>
<dbReference type="SMART" id="SM00329">
    <property type="entry name" value="BPI2"/>
    <property type="match status" value="1"/>
</dbReference>
<dbReference type="SUPFAM" id="SSF55394">
    <property type="entry name" value="Bactericidal permeability-increasing protein, BPI"/>
    <property type="match status" value="2"/>
</dbReference>
<sequence>MMLGVYTLLLLWGLATPCLGLLETVGTLARIDKDELGKAIQNSLVGGPILQNVLGTVTSVNQGLLGAGGLLGGGGLLSYGGIFSLVEELSGLKIEELTLPKVSLKLLPGVGVQLNLHTKVSLHGSGPLVGLLQLAAEVNVSSKVALGMSPRGTPILVLKRCSTLLGHISLMSGLLPTPIFGLVEQTLCKVLPGLLCPVVDSVLSVVNELLGATLSLVPLGPLGSVEFTLATLPLISNQYIELDINPIVKSIAGDVIDFPKPRIPVKVPPKEDHTSQVTVPLYLFSTVFGLLQTNGALDLDITPEMVPRNVPLTTTDLAALAPEALGKLPPAQHLLLSLRVTKSPMVLLQNKKATVSIPVTIHVLSSVPQGTPVALFQLNGVMTLNAHLAPSSTKLHISLSLERLSVQLASSFPQPFDASRLEEWLSDVVRAAYMQRLNEHLEVGIPLPKILNVNFANSVVDIIENAVVLTVAP</sequence>
<organism>
    <name type="scientific">Mus musculus</name>
    <name type="common">Mouse</name>
    <dbReference type="NCBI Taxonomy" id="10090"/>
    <lineage>
        <taxon>Eukaryota</taxon>
        <taxon>Metazoa</taxon>
        <taxon>Chordata</taxon>
        <taxon>Craniata</taxon>
        <taxon>Vertebrata</taxon>
        <taxon>Euteleostomi</taxon>
        <taxon>Mammalia</taxon>
        <taxon>Eutheria</taxon>
        <taxon>Euarchontoglires</taxon>
        <taxon>Glires</taxon>
        <taxon>Rodentia</taxon>
        <taxon>Myomorpha</taxon>
        <taxon>Muroidea</taxon>
        <taxon>Muridae</taxon>
        <taxon>Murinae</taxon>
        <taxon>Mus</taxon>
        <taxon>Mus</taxon>
    </lineage>
</organism>
<comment type="function">
    <text evidence="1">May have the capacity to recognize and bind specific classes of odorants. May act as a carrier molecule, transporting odorants across the mucus layer to access receptor sites. May serve as a primary defense mechanism by recognizing and removing potentially harmful odorants or pathogenic microorganisms from the mucosa or clearing excess odorant from mucus to enable new odorant stimuli to be received (By similarity).</text>
</comment>
<comment type="subcellular location">
    <subcellularLocation>
        <location evidence="1">Secreted</location>
    </subcellularLocation>
</comment>
<comment type="similarity">
    <text evidence="3">Belongs to the BPI/LBP/Plunc superfamily. BPI/LBP family.</text>
</comment>
<accession>Q80ZU7</accession>
<accession>A2APD1</accession>
<evidence type="ECO:0000250" key="1"/>
<evidence type="ECO:0000255" key="2"/>
<evidence type="ECO:0000305" key="3"/>
<evidence type="ECO:0000312" key="4">
    <source>
        <dbReference type="MGI" id="MGI:2675077"/>
    </source>
</evidence>